<organism>
    <name type="scientific">Rattus norvegicus</name>
    <name type="common">Rat</name>
    <dbReference type="NCBI Taxonomy" id="10116"/>
    <lineage>
        <taxon>Eukaryota</taxon>
        <taxon>Metazoa</taxon>
        <taxon>Chordata</taxon>
        <taxon>Craniata</taxon>
        <taxon>Vertebrata</taxon>
        <taxon>Euteleostomi</taxon>
        <taxon>Mammalia</taxon>
        <taxon>Eutheria</taxon>
        <taxon>Euarchontoglires</taxon>
        <taxon>Glires</taxon>
        <taxon>Rodentia</taxon>
        <taxon>Myomorpha</taxon>
        <taxon>Muroidea</taxon>
        <taxon>Muridae</taxon>
        <taxon>Murinae</taxon>
        <taxon>Rattus</taxon>
    </lineage>
</organism>
<gene>
    <name evidence="6" type="primary">Lbx1</name>
    <name evidence="2" type="synonym">Lbx1h</name>
</gene>
<sequence>MTSKEDGKAAPGEERRRSPLDHLPPPANSNKPLTPFSIEDILNKPSVRRSYSLCGAAHLLAAADKHAPGGLPLAGRALLSQTSPLCALEELASKTFKGLEVSVLQAAEGRDGMTIFGQRQTPKKRRKSRTAFTNHQIYELEKRFLYQKYLSPADRDQIAQQLGLTNAQVITWFQNRRAKLKRDLEEMKADVESAKKLGPSGQMDIVALAELEQNSEASGGGGGGGGGGCGRAKSRPGSPALPPGAPQAPGGGPLQLSPASPLTDQRASSQDCSEDEEDEEIDVDD</sequence>
<proteinExistence type="evidence at transcript level"/>
<protein>
    <recommendedName>
        <fullName>Transcription factor LBX1</fullName>
    </recommendedName>
    <alternativeName>
        <fullName>Ladybird homeobox protein homolog 1</fullName>
    </alternativeName>
</protein>
<comment type="function">
    <text evidence="2">Transcription factor required for the development of GABAergic interneurons in the dorsal horn of the spinal cord and migration and further development of hypaxial muscle precursor cells for limb muscles, diaphragm and hypoglossal cord.</text>
</comment>
<comment type="subunit">
    <text evidence="1">Interacts with SKOR1 which acts as a transcriptional corepressor.</text>
</comment>
<comment type="subcellular location">
    <subcellularLocation>
        <location evidence="5">Nucleus</location>
    </subcellularLocation>
</comment>
<dbReference type="EMBL" id="AB197923">
    <property type="protein sequence ID" value="BAE92722.1"/>
    <property type="molecule type" value="mRNA"/>
</dbReference>
<dbReference type="RefSeq" id="NP_001040573.1">
    <property type="nucleotide sequence ID" value="NM_001047108.1"/>
</dbReference>
<dbReference type="SMR" id="Q1XID0"/>
<dbReference type="FunCoup" id="Q1XID0">
    <property type="interactions" value="106"/>
</dbReference>
<dbReference type="STRING" id="10116.ENSRNOP00000021747"/>
<dbReference type="PhosphoSitePlus" id="Q1XID0"/>
<dbReference type="PaxDb" id="10116-ENSRNOP00000021747"/>
<dbReference type="Ensembl" id="ENSRNOT00000021748.5">
    <property type="protein sequence ID" value="ENSRNOP00000021747.3"/>
    <property type="gene ID" value="ENSRNOG00000025520.5"/>
</dbReference>
<dbReference type="GeneID" id="499362"/>
<dbReference type="KEGG" id="rno:499362"/>
<dbReference type="AGR" id="RGD:1564197"/>
<dbReference type="CTD" id="10660"/>
<dbReference type="RGD" id="1564197">
    <property type="gene designation" value="Lbx1"/>
</dbReference>
<dbReference type="eggNOG" id="KOG0488">
    <property type="taxonomic scope" value="Eukaryota"/>
</dbReference>
<dbReference type="GeneTree" id="ENSGT00940000161756"/>
<dbReference type="HOGENOM" id="CLU_086390_0_0_1"/>
<dbReference type="InParanoid" id="Q1XID0"/>
<dbReference type="OMA" id="THPKHGL"/>
<dbReference type="OrthoDB" id="6159439at2759"/>
<dbReference type="PhylomeDB" id="Q1XID0"/>
<dbReference type="TreeFam" id="TF325047"/>
<dbReference type="PRO" id="PR:Q1XID0"/>
<dbReference type="Proteomes" id="UP000002494">
    <property type="component" value="Chromosome 1"/>
</dbReference>
<dbReference type="Bgee" id="ENSRNOG00000025520">
    <property type="expression patterns" value="Expressed in quadriceps femoris and 3 other cell types or tissues"/>
</dbReference>
<dbReference type="GO" id="GO:0005634">
    <property type="term" value="C:nucleus"/>
    <property type="evidence" value="ECO:0000318"/>
    <property type="project" value="GO_Central"/>
</dbReference>
<dbReference type="GO" id="GO:0005667">
    <property type="term" value="C:transcription regulator complex"/>
    <property type="evidence" value="ECO:0000266"/>
    <property type="project" value="RGD"/>
</dbReference>
<dbReference type="GO" id="GO:0003700">
    <property type="term" value="F:DNA-binding transcription factor activity"/>
    <property type="evidence" value="ECO:0000266"/>
    <property type="project" value="RGD"/>
</dbReference>
<dbReference type="GO" id="GO:0000981">
    <property type="term" value="F:DNA-binding transcription factor activity, RNA polymerase II-specific"/>
    <property type="evidence" value="ECO:0000318"/>
    <property type="project" value="GO_Central"/>
</dbReference>
<dbReference type="GO" id="GO:1990837">
    <property type="term" value="F:sequence-specific double-stranded DNA binding"/>
    <property type="evidence" value="ECO:0000318"/>
    <property type="project" value="GO_Central"/>
</dbReference>
<dbReference type="GO" id="GO:0008283">
    <property type="term" value="P:cell population proliferation"/>
    <property type="evidence" value="ECO:0000266"/>
    <property type="project" value="RGD"/>
</dbReference>
<dbReference type="GO" id="GO:1905962">
    <property type="term" value="P:glutamatergic neuron differentiation"/>
    <property type="evidence" value="ECO:0000266"/>
    <property type="project" value="RGD"/>
</dbReference>
<dbReference type="GO" id="GO:0001947">
    <property type="term" value="P:heart looping"/>
    <property type="evidence" value="ECO:0000266"/>
    <property type="project" value="RGD"/>
</dbReference>
<dbReference type="GO" id="GO:0007517">
    <property type="term" value="P:muscle organ development"/>
    <property type="evidence" value="ECO:0007669"/>
    <property type="project" value="UniProtKB-KW"/>
</dbReference>
<dbReference type="GO" id="GO:0008285">
    <property type="term" value="P:negative regulation of cell population proliferation"/>
    <property type="evidence" value="ECO:0000266"/>
    <property type="project" value="RGD"/>
</dbReference>
<dbReference type="GO" id="GO:0120007">
    <property type="term" value="P:negative regulation of glutamatergic neuron differentiation"/>
    <property type="evidence" value="ECO:0000266"/>
    <property type="project" value="RGD"/>
</dbReference>
<dbReference type="GO" id="GO:0048663">
    <property type="term" value="P:neuron fate commitment"/>
    <property type="evidence" value="ECO:0000266"/>
    <property type="project" value="RGD"/>
</dbReference>
<dbReference type="GO" id="GO:0048664">
    <property type="term" value="P:neuron fate determination"/>
    <property type="evidence" value="ECO:0000266"/>
    <property type="project" value="RGD"/>
</dbReference>
<dbReference type="GO" id="GO:0006355">
    <property type="term" value="P:regulation of DNA-templated transcription"/>
    <property type="evidence" value="ECO:0000266"/>
    <property type="project" value="RGD"/>
</dbReference>
<dbReference type="GO" id="GO:0006357">
    <property type="term" value="P:regulation of transcription by RNA polymerase II"/>
    <property type="evidence" value="ECO:0000266"/>
    <property type="project" value="RGD"/>
</dbReference>
<dbReference type="GO" id="GO:0021522">
    <property type="term" value="P:spinal cord motor neuron differentiation"/>
    <property type="evidence" value="ECO:0000266"/>
    <property type="project" value="RGD"/>
</dbReference>
<dbReference type="CDD" id="cd00086">
    <property type="entry name" value="homeodomain"/>
    <property type="match status" value="1"/>
</dbReference>
<dbReference type="FunFam" id="1.10.10.60:FF:000098">
    <property type="entry name" value="Transcription factor LBX1"/>
    <property type="match status" value="1"/>
</dbReference>
<dbReference type="Gene3D" id="1.10.10.60">
    <property type="entry name" value="Homeodomain-like"/>
    <property type="match status" value="1"/>
</dbReference>
<dbReference type="InterPro" id="IPR001356">
    <property type="entry name" value="HD"/>
</dbReference>
<dbReference type="InterPro" id="IPR017970">
    <property type="entry name" value="Homeobox_CS"/>
</dbReference>
<dbReference type="InterPro" id="IPR009057">
    <property type="entry name" value="Homeodomain-like_sf"/>
</dbReference>
<dbReference type="InterPro" id="IPR000047">
    <property type="entry name" value="HTH_motif"/>
</dbReference>
<dbReference type="InterPro" id="IPR051892">
    <property type="entry name" value="LBX_TF"/>
</dbReference>
<dbReference type="PANTHER" id="PTHR24336">
    <property type="entry name" value="TRANSCRIPTION FACTOR LBX"/>
    <property type="match status" value="1"/>
</dbReference>
<dbReference type="PANTHER" id="PTHR24336:SF9">
    <property type="entry name" value="TRANSCRIPTION FACTOR LBX1"/>
    <property type="match status" value="1"/>
</dbReference>
<dbReference type="Pfam" id="PF00046">
    <property type="entry name" value="Homeodomain"/>
    <property type="match status" value="1"/>
</dbReference>
<dbReference type="PRINTS" id="PR00031">
    <property type="entry name" value="HTHREPRESSR"/>
</dbReference>
<dbReference type="SMART" id="SM00389">
    <property type="entry name" value="HOX"/>
    <property type="match status" value="1"/>
</dbReference>
<dbReference type="SUPFAM" id="SSF46689">
    <property type="entry name" value="Homeodomain-like"/>
    <property type="match status" value="1"/>
</dbReference>
<dbReference type="PROSITE" id="PS00027">
    <property type="entry name" value="HOMEOBOX_1"/>
    <property type="match status" value="1"/>
</dbReference>
<dbReference type="PROSITE" id="PS50071">
    <property type="entry name" value="HOMEOBOX_2"/>
    <property type="match status" value="1"/>
</dbReference>
<evidence type="ECO:0000250" key="1"/>
<evidence type="ECO:0000250" key="2">
    <source>
        <dbReference type="UniProtKB" id="P52955"/>
    </source>
</evidence>
<evidence type="ECO:0000255" key="3">
    <source>
        <dbReference type="PROSITE-ProRule" id="PRU00108"/>
    </source>
</evidence>
<evidence type="ECO:0000256" key="4">
    <source>
        <dbReference type="SAM" id="MobiDB-lite"/>
    </source>
</evidence>
<evidence type="ECO:0000305" key="5"/>
<evidence type="ECO:0000312" key="6">
    <source>
        <dbReference type="EMBL" id="BAE92722.1"/>
    </source>
</evidence>
<feature type="chain" id="PRO_0000260041" description="Transcription factor LBX1">
    <location>
        <begin position="1"/>
        <end position="285"/>
    </location>
</feature>
<feature type="DNA-binding region" description="Homeobox" evidence="3">
    <location>
        <begin position="125"/>
        <end position="184"/>
    </location>
</feature>
<feature type="region of interest" description="Disordered" evidence="4">
    <location>
        <begin position="1"/>
        <end position="36"/>
    </location>
</feature>
<feature type="region of interest" description="Disordered" evidence="4">
    <location>
        <begin position="212"/>
        <end position="285"/>
    </location>
</feature>
<feature type="compositionally biased region" description="Basic and acidic residues" evidence="4">
    <location>
        <begin position="1"/>
        <end position="20"/>
    </location>
</feature>
<feature type="compositionally biased region" description="Gly residues" evidence="4">
    <location>
        <begin position="218"/>
        <end position="230"/>
    </location>
</feature>
<feature type="compositionally biased region" description="Acidic residues" evidence="4">
    <location>
        <begin position="272"/>
        <end position="285"/>
    </location>
</feature>
<keyword id="KW-0217">Developmental protein</keyword>
<keyword id="KW-0221">Differentiation</keyword>
<keyword id="KW-0238">DNA-binding</keyword>
<keyword id="KW-0371">Homeobox</keyword>
<keyword id="KW-0517">Myogenesis</keyword>
<keyword id="KW-0524">Neurogenesis</keyword>
<keyword id="KW-0539">Nucleus</keyword>
<keyword id="KW-1185">Reference proteome</keyword>
<keyword id="KW-0804">Transcription</keyword>
<keyword id="KW-0805">Transcription regulation</keyword>
<name>LBX1_RAT</name>
<accession>Q1XID0</accession>
<reference evidence="6" key="1">
    <citation type="submission" date="2005-01" db="EMBL/GenBank/DDBJ databases">
        <title>Expressions of homeobox and bHLH transcription factors in the developing hindbrain.</title>
        <authorList>
            <person name="Takahashi M."/>
            <person name="Osumi N."/>
        </authorList>
    </citation>
    <scope>NUCLEOTIDE SEQUENCE [MRNA]</scope>
    <source>
        <strain evidence="6">Sprague-Dawley</strain>
        <tissue evidence="6">Embryo</tissue>
    </source>
</reference>